<evidence type="ECO:0000255" key="1">
    <source>
        <dbReference type="HAMAP-Rule" id="MF_00182"/>
    </source>
</evidence>
<feature type="chain" id="PRO_1000190010" description="Methionyl-tRNA formyltransferase">
    <location>
        <begin position="1"/>
        <end position="306"/>
    </location>
</feature>
<feature type="binding site" evidence="1">
    <location>
        <begin position="110"/>
        <end position="113"/>
    </location>
    <ligand>
        <name>(6S)-5,6,7,8-tetrahydrofolate</name>
        <dbReference type="ChEBI" id="CHEBI:57453"/>
    </ligand>
</feature>
<sequence length="306" mass="32771">MRVVFMGTPEFSVPILTAIIGHGYEVVAAYTQPPRPAGRRGLELTRSPVHEKAEQFGIPVFTPKSLKGAEEQDVFASLKADVAIVVAYGLLLPKAILDAPRLGCYNGHASLLPRWRGAAPIQRAIMAGDAETGMMIMKMDEGLDTGPVAMAEKVAITPDMTAGELHDRLSMIGADLMIRALGALERESLALQPQAEEGVTYAAKIDKAEARIDWSKPAKDVHNSIRGLSPFPGAWCEMEINGAVERVKLQRSTLGEGSGAPGTVLDDRLTIACGEGAVRLATLQRSGGKPLPAQEFLRGQRVTKVL</sequence>
<reference key="1">
    <citation type="submission" date="2009-03" db="EMBL/GenBank/DDBJ databases">
        <title>Brucella melitensis ATCC 23457 whole genome shotgun sequencing project.</title>
        <authorList>
            <person name="Setubal J.C."/>
            <person name="Boyle S."/>
            <person name="Crasta O.R."/>
            <person name="Gillespie J.J."/>
            <person name="Kenyon R.W."/>
            <person name="Lu J."/>
            <person name="Mane S."/>
            <person name="Nagrani S."/>
            <person name="Shallom J.M."/>
            <person name="Shallom S."/>
            <person name="Shukla M."/>
            <person name="Snyder E.E."/>
            <person name="Sobral B.W."/>
            <person name="Wattam A.R."/>
            <person name="Will R."/>
            <person name="Williams K."/>
            <person name="Yoo H."/>
            <person name="Munk C."/>
            <person name="Tapia R."/>
            <person name="Han C."/>
            <person name="Detter J.C."/>
            <person name="Bruce D."/>
            <person name="Brettin T.S."/>
        </authorList>
    </citation>
    <scope>NUCLEOTIDE SEQUENCE [LARGE SCALE GENOMIC DNA]</scope>
    <source>
        <strain>ATCC 23457</strain>
    </source>
</reference>
<protein>
    <recommendedName>
        <fullName evidence="1">Methionyl-tRNA formyltransferase</fullName>
        <ecNumber evidence="1">2.1.2.9</ecNumber>
    </recommendedName>
</protein>
<proteinExistence type="inferred from homology"/>
<organism>
    <name type="scientific">Brucella melitensis biotype 2 (strain ATCC 23457)</name>
    <dbReference type="NCBI Taxonomy" id="546272"/>
    <lineage>
        <taxon>Bacteria</taxon>
        <taxon>Pseudomonadati</taxon>
        <taxon>Pseudomonadota</taxon>
        <taxon>Alphaproteobacteria</taxon>
        <taxon>Hyphomicrobiales</taxon>
        <taxon>Brucellaceae</taxon>
        <taxon>Brucella/Ochrobactrum group</taxon>
        <taxon>Brucella</taxon>
    </lineage>
</organism>
<dbReference type="EC" id="2.1.2.9" evidence="1"/>
<dbReference type="EMBL" id="CP001489">
    <property type="protein sequence ID" value="ACO02806.1"/>
    <property type="molecule type" value="Genomic_DNA"/>
</dbReference>
<dbReference type="RefSeq" id="WP_004685942.1">
    <property type="nucleotide sequence ID" value="NC_012442.1"/>
</dbReference>
<dbReference type="SMR" id="C0RMH3"/>
<dbReference type="KEGG" id="bmi:BMEA_B1019"/>
<dbReference type="HOGENOM" id="CLU_033347_1_2_5"/>
<dbReference type="Proteomes" id="UP000001748">
    <property type="component" value="Chromosome II"/>
</dbReference>
<dbReference type="GO" id="GO:0005829">
    <property type="term" value="C:cytosol"/>
    <property type="evidence" value="ECO:0007669"/>
    <property type="project" value="TreeGrafter"/>
</dbReference>
<dbReference type="GO" id="GO:0004479">
    <property type="term" value="F:methionyl-tRNA formyltransferase activity"/>
    <property type="evidence" value="ECO:0007669"/>
    <property type="project" value="UniProtKB-UniRule"/>
</dbReference>
<dbReference type="CDD" id="cd08646">
    <property type="entry name" value="FMT_core_Met-tRNA-FMT_N"/>
    <property type="match status" value="1"/>
</dbReference>
<dbReference type="CDD" id="cd08704">
    <property type="entry name" value="Met_tRNA_FMT_C"/>
    <property type="match status" value="1"/>
</dbReference>
<dbReference type="FunFam" id="3.40.50.12230:FF:000001">
    <property type="entry name" value="Methionyl-tRNA formyltransferase"/>
    <property type="match status" value="1"/>
</dbReference>
<dbReference type="Gene3D" id="3.10.25.10">
    <property type="entry name" value="Formyl transferase, C-terminal domain"/>
    <property type="match status" value="1"/>
</dbReference>
<dbReference type="Gene3D" id="3.40.50.170">
    <property type="entry name" value="Formyl transferase, N-terminal domain"/>
    <property type="match status" value="1"/>
</dbReference>
<dbReference type="HAMAP" id="MF_00182">
    <property type="entry name" value="Formyl_trans"/>
    <property type="match status" value="1"/>
</dbReference>
<dbReference type="InterPro" id="IPR005794">
    <property type="entry name" value="Fmt"/>
</dbReference>
<dbReference type="InterPro" id="IPR005793">
    <property type="entry name" value="Formyl_trans_C"/>
</dbReference>
<dbReference type="InterPro" id="IPR037022">
    <property type="entry name" value="Formyl_trans_C_sf"/>
</dbReference>
<dbReference type="InterPro" id="IPR002376">
    <property type="entry name" value="Formyl_transf_N"/>
</dbReference>
<dbReference type="InterPro" id="IPR036477">
    <property type="entry name" value="Formyl_transf_N_sf"/>
</dbReference>
<dbReference type="InterPro" id="IPR011034">
    <property type="entry name" value="Formyl_transferase-like_C_sf"/>
</dbReference>
<dbReference type="InterPro" id="IPR001555">
    <property type="entry name" value="GART_AS"/>
</dbReference>
<dbReference type="InterPro" id="IPR044135">
    <property type="entry name" value="Met-tRNA-FMT_C"/>
</dbReference>
<dbReference type="InterPro" id="IPR041711">
    <property type="entry name" value="Met-tRNA-FMT_N"/>
</dbReference>
<dbReference type="NCBIfam" id="TIGR00460">
    <property type="entry name" value="fmt"/>
    <property type="match status" value="1"/>
</dbReference>
<dbReference type="PANTHER" id="PTHR11138">
    <property type="entry name" value="METHIONYL-TRNA FORMYLTRANSFERASE"/>
    <property type="match status" value="1"/>
</dbReference>
<dbReference type="PANTHER" id="PTHR11138:SF5">
    <property type="entry name" value="METHIONYL-TRNA FORMYLTRANSFERASE, MITOCHONDRIAL"/>
    <property type="match status" value="1"/>
</dbReference>
<dbReference type="Pfam" id="PF02911">
    <property type="entry name" value="Formyl_trans_C"/>
    <property type="match status" value="1"/>
</dbReference>
<dbReference type="Pfam" id="PF00551">
    <property type="entry name" value="Formyl_trans_N"/>
    <property type="match status" value="1"/>
</dbReference>
<dbReference type="SUPFAM" id="SSF50486">
    <property type="entry name" value="FMT C-terminal domain-like"/>
    <property type="match status" value="1"/>
</dbReference>
<dbReference type="SUPFAM" id="SSF53328">
    <property type="entry name" value="Formyltransferase"/>
    <property type="match status" value="1"/>
</dbReference>
<dbReference type="PROSITE" id="PS00373">
    <property type="entry name" value="GART"/>
    <property type="match status" value="1"/>
</dbReference>
<comment type="function">
    <text evidence="1">Attaches a formyl group to the free amino group of methionyl-tRNA(fMet). The formyl group appears to play a dual role in the initiator identity of N-formylmethionyl-tRNA by promoting its recognition by IF2 and preventing the misappropriation of this tRNA by the elongation apparatus.</text>
</comment>
<comment type="catalytic activity">
    <reaction evidence="1">
        <text>L-methionyl-tRNA(fMet) + (6R)-10-formyltetrahydrofolate = N-formyl-L-methionyl-tRNA(fMet) + (6S)-5,6,7,8-tetrahydrofolate + H(+)</text>
        <dbReference type="Rhea" id="RHEA:24380"/>
        <dbReference type="Rhea" id="RHEA-COMP:9952"/>
        <dbReference type="Rhea" id="RHEA-COMP:9953"/>
        <dbReference type="ChEBI" id="CHEBI:15378"/>
        <dbReference type="ChEBI" id="CHEBI:57453"/>
        <dbReference type="ChEBI" id="CHEBI:78530"/>
        <dbReference type="ChEBI" id="CHEBI:78844"/>
        <dbReference type="ChEBI" id="CHEBI:195366"/>
        <dbReference type="EC" id="2.1.2.9"/>
    </reaction>
</comment>
<comment type="similarity">
    <text evidence="1">Belongs to the Fmt family.</text>
</comment>
<accession>C0RMH3</accession>
<keyword id="KW-0648">Protein biosynthesis</keyword>
<keyword id="KW-0808">Transferase</keyword>
<name>FMT_BRUMB</name>
<gene>
    <name evidence="1" type="primary">fmt</name>
    <name type="ordered locus">BMEA_B1019</name>
</gene>